<protein>
    <recommendedName>
        <fullName evidence="1">D-aminoacyl-tRNA deacylase</fullName>
        <shortName evidence="1">DTD</shortName>
        <ecNumber evidence="1">3.1.1.96</ecNumber>
    </recommendedName>
    <alternativeName>
        <fullName evidence="1">Gly-tRNA(Ala) deacylase</fullName>
    </alternativeName>
</protein>
<gene>
    <name evidence="1" type="primary">dtd</name>
    <name type="ordered locus">lin1557</name>
</gene>
<name>DTD_LISIN</name>
<evidence type="ECO:0000255" key="1">
    <source>
        <dbReference type="HAMAP-Rule" id="MF_00518"/>
    </source>
</evidence>
<reference key="1">
    <citation type="journal article" date="2001" name="Science">
        <title>Comparative genomics of Listeria species.</title>
        <authorList>
            <person name="Glaser P."/>
            <person name="Frangeul L."/>
            <person name="Buchrieser C."/>
            <person name="Rusniok C."/>
            <person name="Amend A."/>
            <person name="Baquero F."/>
            <person name="Berche P."/>
            <person name="Bloecker H."/>
            <person name="Brandt P."/>
            <person name="Chakraborty T."/>
            <person name="Charbit A."/>
            <person name="Chetouani F."/>
            <person name="Couve E."/>
            <person name="de Daruvar A."/>
            <person name="Dehoux P."/>
            <person name="Domann E."/>
            <person name="Dominguez-Bernal G."/>
            <person name="Duchaud E."/>
            <person name="Durant L."/>
            <person name="Dussurget O."/>
            <person name="Entian K.-D."/>
            <person name="Fsihi H."/>
            <person name="Garcia-del Portillo F."/>
            <person name="Garrido P."/>
            <person name="Gautier L."/>
            <person name="Goebel W."/>
            <person name="Gomez-Lopez N."/>
            <person name="Hain T."/>
            <person name="Hauf J."/>
            <person name="Jackson D."/>
            <person name="Jones L.-M."/>
            <person name="Kaerst U."/>
            <person name="Kreft J."/>
            <person name="Kuhn M."/>
            <person name="Kunst F."/>
            <person name="Kurapkat G."/>
            <person name="Madueno E."/>
            <person name="Maitournam A."/>
            <person name="Mata Vicente J."/>
            <person name="Ng E."/>
            <person name="Nedjari H."/>
            <person name="Nordsiek G."/>
            <person name="Novella S."/>
            <person name="de Pablos B."/>
            <person name="Perez-Diaz J.-C."/>
            <person name="Purcell R."/>
            <person name="Remmel B."/>
            <person name="Rose M."/>
            <person name="Schlueter T."/>
            <person name="Simoes N."/>
            <person name="Tierrez A."/>
            <person name="Vazquez-Boland J.-A."/>
            <person name="Voss H."/>
            <person name="Wehland J."/>
            <person name="Cossart P."/>
        </authorList>
    </citation>
    <scope>NUCLEOTIDE SEQUENCE [LARGE SCALE GENOMIC DNA]</scope>
    <source>
        <strain>ATCC BAA-680 / CLIP 11262</strain>
    </source>
</reference>
<keyword id="KW-0963">Cytoplasm</keyword>
<keyword id="KW-0378">Hydrolase</keyword>
<keyword id="KW-0694">RNA-binding</keyword>
<keyword id="KW-0820">tRNA-binding</keyword>
<comment type="function">
    <text evidence="1">An aminoacyl-tRNA editing enzyme that deacylates mischarged D-aminoacyl-tRNAs. Also deacylates mischarged glycyl-tRNA(Ala), protecting cells against glycine mischarging by AlaRS. Acts via tRNA-based rather than protein-based catalysis; rejects L-amino acids rather than detecting D-amino acids in the active site. By recycling D-aminoacyl-tRNA to D-amino acids and free tRNA molecules, this enzyme counteracts the toxicity associated with the formation of D-aminoacyl-tRNA entities in vivo and helps enforce protein L-homochirality.</text>
</comment>
<comment type="catalytic activity">
    <reaction evidence="1">
        <text>glycyl-tRNA(Ala) + H2O = tRNA(Ala) + glycine + H(+)</text>
        <dbReference type="Rhea" id="RHEA:53744"/>
        <dbReference type="Rhea" id="RHEA-COMP:9657"/>
        <dbReference type="Rhea" id="RHEA-COMP:13640"/>
        <dbReference type="ChEBI" id="CHEBI:15377"/>
        <dbReference type="ChEBI" id="CHEBI:15378"/>
        <dbReference type="ChEBI" id="CHEBI:57305"/>
        <dbReference type="ChEBI" id="CHEBI:78442"/>
        <dbReference type="ChEBI" id="CHEBI:78522"/>
        <dbReference type="EC" id="3.1.1.96"/>
    </reaction>
</comment>
<comment type="catalytic activity">
    <reaction evidence="1">
        <text>a D-aminoacyl-tRNA + H2O = a tRNA + a D-alpha-amino acid + H(+)</text>
        <dbReference type="Rhea" id="RHEA:13953"/>
        <dbReference type="Rhea" id="RHEA-COMP:10123"/>
        <dbReference type="Rhea" id="RHEA-COMP:10124"/>
        <dbReference type="ChEBI" id="CHEBI:15377"/>
        <dbReference type="ChEBI" id="CHEBI:15378"/>
        <dbReference type="ChEBI" id="CHEBI:59871"/>
        <dbReference type="ChEBI" id="CHEBI:78442"/>
        <dbReference type="ChEBI" id="CHEBI:79333"/>
        <dbReference type="EC" id="3.1.1.96"/>
    </reaction>
</comment>
<comment type="subunit">
    <text evidence="1">Homodimer.</text>
</comment>
<comment type="subcellular location">
    <subcellularLocation>
        <location evidence="1">Cytoplasm</location>
    </subcellularLocation>
</comment>
<comment type="domain">
    <text evidence="1">A Gly-cisPro motif from one monomer fits into the active site of the other monomer to allow specific chiral rejection of L-amino acids.</text>
</comment>
<comment type="similarity">
    <text evidence="1">Belongs to the DTD family.</text>
</comment>
<dbReference type="EC" id="3.1.1.96" evidence="1"/>
<dbReference type="EMBL" id="AL596169">
    <property type="protein sequence ID" value="CAC96788.1"/>
    <property type="molecule type" value="Genomic_DNA"/>
</dbReference>
<dbReference type="PIR" id="AD1627">
    <property type="entry name" value="AD1627"/>
</dbReference>
<dbReference type="RefSeq" id="WP_003762386.1">
    <property type="nucleotide sequence ID" value="NC_003212.1"/>
</dbReference>
<dbReference type="SMR" id="Q92BJ1"/>
<dbReference type="STRING" id="272626.gene:17565888"/>
<dbReference type="GeneID" id="93234939"/>
<dbReference type="KEGG" id="lin:lin1557"/>
<dbReference type="eggNOG" id="COG1490">
    <property type="taxonomic scope" value="Bacteria"/>
</dbReference>
<dbReference type="HOGENOM" id="CLU_076901_1_0_9"/>
<dbReference type="OrthoDB" id="9801395at2"/>
<dbReference type="Proteomes" id="UP000002513">
    <property type="component" value="Chromosome"/>
</dbReference>
<dbReference type="GO" id="GO:0005737">
    <property type="term" value="C:cytoplasm"/>
    <property type="evidence" value="ECO:0007669"/>
    <property type="project" value="UniProtKB-SubCell"/>
</dbReference>
<dbReference type="GO" id="GO:0051500">
    <property type="term" value="F:D-tyrosyl-tRNA(Tyr) deacylase activity"/>
    <property type="evidence" value="ECO:0007669"/>
    <property type="project" value="TreeGrafter"/>
</dbReference>
<dbReference type="GO" id="GO:0106026">
    <property type="term" value="F:Gly-tRNA(Ala) deacylase activity"/>
    <property type="evidence" value="ECO:0007669"/>
    <property type="project" value="UniProtKB-UniRule"/>
</dbReference>
<dbReference type="GO" id="GO:0043908">
    <property type="term" value="F:Ser(Gly)-tRNA(Ala) hydrolase activity"/>
    <property type="evidence" value="ECO:0007669"/>
    <property type="project" value="UniProtKB-UniRule"/>
</dbReference>
<dbReference type="GO" id="GO:0000049">
    <property type="term" value="F:tRNA binding"/>
    <property type="evidence" value="ECO:0007669"/>
    <property type="project" value="UniProtKB-UniRule"/>
</dbReference>
<dbReference type="GO" id="GO:0019478">
    <property type="term" value="P:D-amino acid catabolic process"/>
    <property type="evidence" value="ECO:0007669"/>
    <property type="project" value="UniProtKB-UniRule"/>
</dbReference>
<dbReference type="CDD" id="cd00563">
    <property type="entry name" value="Dtyr_deacylase"/>
    <property type="match status" value="1"/>
</dbReference>
<dbReference type="FunFam" id="3.50.80.10:FF:000001">
    <property type="entry name" value="D-aminoacyl-tRNA deacylase"/>
    <property type="match status" value="1"/>
</dbReference>
<dbReference type="Gene3D" id="3.50.80.10">
    <property type="entry name" value="D-tyrosyl-tRNA(Tyr) deacylase"/>
    <property type="match status" value="1"/>
</dbReference>
<dbReference type="HAMAP" id="MF_00518">
    <property type="entry name" value="Deacylase_Dtd"/>
    <property type="match status" value="1"/>
</dbReference>
<dbReference type="InterPro" id="IPR003732">
    <property type="entry name" value="Daa-tRNA_deacyls_DTD"/>
</dbReference>
<dbReference type="InterPro" id="IPR023509">
    <property type="entry name" value="DTD-like_sf"/>
</dbReference>
<dbReference type="NCBIfam" id="TIGR00256">
    <property type="entry name" value="D-aminoacyl-tRNA deacylase"/>
    <property type="match status" value="1"/>
</dbReference>
<dbReference type="PANTHER" id="PTHR10472:SF5">
    <property type="entry name" value="D-AMINOACYL-TRNA DEACYLASE 1"/>
    <property type="match status" value="1"/>
</dbReference>
<dbReference type="PANTHER" id="PTHR10472">
    <property type="entry name" value="D-TYROSYL-TRNA TYR DEACYLASE"/>
    <property type="match status" value="1"/>
</dbReference>
<dbReference type="Pfam" id="PF02580">
    <property type="entry name" value="Tyr_Deacylase"/>
    <property type="match status" value="1"/>
</dbReference>
<dbReference type="SUPFAM" id="SSF69500">
    <property type="entry name" value="DTD-like"/>
    <property type="match status" value="1"/>
</dbReference>
<accession>Q92BJ1</accession>
<sequence length="150" mass="16524">MRVLLQRCYEASVRVEGEIISEIAGGLCLLVGFTHSDTEETVEYMAKKIIGLRVFEDESEKMNISLAERGGAILSVSQFTLYADVSRGKRPSFTKSAPGEKAEGLYNLFNNKLSDAGFIVETGVFGAFMDVKIVNNGPVTIMLDSEEMRK</sequence>
<proteinExistence type="inferred from homology"/>
<organism>
    <name type="scientific">Listeria innocua serovar 6a (strain ATCC BAA-680 / CLIP 11262)</name>
    <dbReference type="NCBI Taxonomy" id="272626"/>
    <lineage>
        <taxon>Bacteria</taxon>
        <taxon>Bacillati</taxon>
        <taxon>Bacillota</taxon>
        <taxon>Bacilli</taxon>
        <taxon>Bacillales</taxon>
        <taxon>Listeriaceae</taxon>
        <taxon>Listeria</taxon>
    </lineage>
</organism>
<feature type="chain" id="PRO_0000164555" description="D-aminoacyl-tRNA deacylase">
    <location>
        <begin position="1"/>
        <end position="150"/>
    </location>
</feature>
<feature type="short sequence motif" description="Gly-cisPro motif, important for rejection of L-amino acids" evidence="1">
    <location>
        <begin position="137"/>
        <end position="138"/>
    </location>
</feature>